<organism>
    <name type="scientific">Buchnera aphidicola subsp. Schizaphis graminum (strain Sg)</name>
    <dbReference type="NCBI Taxonomy" id="198804"/>
    <lineage>
        <taxon>Bacteria</taxon>
        <taxon>Pseudomonadati</taxon>
        <taxon>Pseudomonadota</taxon>
        <taxon>Gammaproteobacteria</taxon>
        <taxon>Enterobacterales</taxon>
        <taxon>Erwiniaceae</taxon>
        <taxon>Buchnera</taxon>
    </lineage>
</organism>
<protein>
    <recommendedName>
        <fullName evidence="1">Shikimate kinase</fullName>
        <shortName evidence="1">SK</shortName>
        <ecNumber evidence="1">2.7.1.71</ecNumber>
    </recommendedName>
</protein>
<dbReference type="EC" id="2.7.1.71" evidence="1"/>
<dbReference type="EMBL" id="AE013218">
    <property type="protein sequence ID" value="AAM68063.1"/>
    <property type="molecule type" value="Genomic_DNA"/>
</dbReference>
<dbReference type="RefSeq" id="WP_011054029.1">
    <property type="nucleotide sequence ID" value="NC_004061.1"/>
</dbReference>
<dbReference type="SMR" id="Q8K938"/>
<dbReference type="STRING" id="198804.BUsg_520"/>
<dbReference type="GeneID" id="93003995"/>
<dbReference type="KEGG" id="bas:BUsg_520"/>
<dbReference type="eggNOG" id="COG0703">
    <property type="taxonomic scope" value="Bacteria"/>
</dbReference>
<dbReference type="HOGENOM" id="CLU_057607_2_2_6"/>
<dbReference type="UniPathway" id="UPA00053">
    <property type="reaction ID" value="UER00088"/>
</dbReference>
<dbReference type="Proteomes" id="UP000000416">
    <property type="component" value="Chromosome"/>
</dbReference>
<dbReference type="GO" id="GO:0005829">
    <property type="term" value="C:cytosol"/>
    <property type="evidence" value="ECO:0007669"/>
    <property type="project" value="TreeGrafter"/>
</dbReference>
<dbReference type="GO" id="GO:0005524">
    <property type="term" value="F:ATP binding"/>
    <property type="evidence" value="ECO:0007669"/>
    <property type="project" value="UniProtKB-UniRule"/>
</dbReference>
<dbReference type="GO" id="GO:0000287">
    <property type="term" value="F:magnesium ion binding"/>
    <property type="evidence" value="ECO:0007669"/>
    <property type="project" value="UniProtKB-UniRule"/>
</dbReference>
<dbReference type="GO" id="GO:0004765">
    <property type="term" value="F:shikimate kinase activity"/>
    <property type="evidence" value="ECO:0007669"/>
    <property type="project" value="UniProtKB-UniRule"/>
</dbReference>
<dbReference type="GO" id="GO:0008652">
    <property type="term" value="P:amino acid biosynthetic process"/>
    <property type="evidence" value="ECO:0007669"/>
    <property type="project" value="UniProtKB-KW"/>
</dbReference>
<dbReference type="GO" id="GO:0009073">
    <property type="term" value="P:aromatic amino acid family biosynthetic process"/>
    <property type="evidence" value="ECO:0007669"/>
    <property type="project" value="UniProtKB-KW"/>
</dbReference>
<dbReference type="GO" id="GO:0009423">
    <property type="term" value="P:chorismate biosynthetic process"/>
    <property type="evidence" value="ECO:0007669"/>
    <property type="project" value="UniProtKB-UniRule"/>
</dbReference>
<dbReference type="CDD" id="cd00464">
    <property type="entry name" value="SK"/>
    <property type="match status" value="1"/>
</dbReference>
<dbReference type="FunFam" id="3.40.50.300:FF:000099">
    <property type="entry name" value="Shikimate kinase 1"/>
    <property type="match status" value="1"/>
</dbReference>
<dbReference type="Gene3D" id="3.40.50.300">
    <property type="entry name" value="P-loop containing nucleotide triphosphate hydrolases"/>
    <property type="match status" value="1"/>
</dbReference>
<dbReference type="HAMAP" id="MF_00109">
    <property type="entry name" value="Shikimate_kinase"/>
    <property type="match status" value="1"/>
</dbReference>
<dbReference type="InterPro" id="IPR027417">
    <property type="entry name" value="P-loop_NTPase"/>
</dbReference>
<dbReference type="InterPro" id="IPR031322">
    <property type="entry name" value="Shikimate/glucono_kinase"/>
</dbReference>
<dbReference type="InterPro" id="IPR000623">
    <property type="entry name" value="Shikimate_kinase/TSH1"/>
</dbReference>
<dbReference type="InterPro" id="IPR023000">
    <property type="entry name" value="Shikimate_kinase_CS"/>
</dbReference>
<dbReference type="NCBIfam" id="NF003456">
    <property type="entry name" value="PRK05057.1"/>
    <property type="match status" value="1"/>
</dbReference>
<dbReference type="PANTHER" id="PTHR21087">
    <property type="entry name" value="SHIKIMATE KINASE"/>
    <property type="match status" value="1"/>
</dbReference>
<dbReference type="PANTHER" id="PTHR21087:SF16">
    <property type="entry name" value="SHIKIMATE KINASE 1, CHLOROPLASTIC"/>
    <property type="match status" value="1"/>
</dbReference>
<dbReference type="Pfam" id="PF01202">
    <property type="entry name" value="SKI"/>
    <property type="match status" value="1"/>
</dbReference>
<dbReference type="PRINTS" id="PR01100">
    <property type="entry name" value="SHIKIMTKNASE"/>
</dbReference>
<dbReference type="SUPFAM" id="SSF52540">
    <property type="entry name" value="P-loop containing nucleoside triphosphate hydrolases"/>
    <property type="match status" value="1"/>
</dbReference>
<dbReference type="PROSITE" id="PS01128">
    <property type="entry name" value="SHIKIMATE_KINASE"/>
    <property type="match status" value="1"/>
</dbReference>
<proteinExistence type="inferred from homology"/>
<feature type="chain" id="PRO_0000192370" description="Shikimate kinase">
    <location>
        <begin position="1"/>
        <end position="173"/>
    </location>
</feature>
<feature type="binding site" evidence="1">
    <location>
        <begin position="14"/>
        <end position="19"/>
    </location>
    <ligand>
        <name>ATP</name>
        <dbReference type="ChEBI" id="CHEBI:30616"/>
    </ligand>
</feature>
<feature type="binding site" evidence="1">
    <location>
        <position position="18"/>
    </location>
    <ligand>
        <name>Mg(2+)</name>
        <dbReference type="ChEBI" id="CHEBI:18420"/>
    </ligand>
</feature>
<feature type="binding site" evidence="1">
    <location>
        <position position="36"/>
    </location>
    <ligand>
        <name>substrate</name>
    </ligand>
</feature>
<feature type="binding site" evidence="1">
    <location>
        <position position="60"/>
    </location>
    <ligand>
        <name>substrate</name>
    </ligand>
</feature>
<feature type="binding site" evidence="1">
    <location>
        <position position="82"/>
    </location>
    <ligand>
        <name>substrate</name>
    </ligand>
</feature>
<feature type="binding site" evidence="1">
    <location>
        <position position="120"/>
    </location>
    <ligand>
        <name>ATP</name>
        <dbReference type="ChEBI" id="CHEBI:30616"/>
    </ligand>
</feature>
<feature type="binding site" evidence="1">
    <location>
        <position position="140"/>
    </location>
    <ligand>
        <name>substrate</name>
    </ligand>
</feature>
<feature type="binding site" evidence="1">
    <location>
        <position position="157"/>
    </location>
    <ligand>
        <name>ATP</name>
        <dbReference type="ChEBI" id="CHEBI:30616"/>
    </ligand>
</feature>
<comment type="function">
    <text evidence="1">Catalyzes the specific phosphorylation of the 3-hydroxyl group of shikimic acid using ATP as a cosubstrate.</text>
</comment>
<comment type="catalytic activity">
    <reaction evidence="1">
        <text>shikimate + ATP = 3-phosphoshikimate + ADP + H(+)</text>
        <dbReference type="Rhea" id="RHEA:13121"/>
        <dbReference type="ChEBI" id="CHEBI:15378"/>
        <dbReference type="ChEBI" id="CHEBI:30616"/>
        <dbReference type="ChEBI" id="CHEBI:36208"/>
        <dbReference type="ChEBI" id="CHEBI:145989"/>
        <dbReference type="ChEBI" id="CHEBI:456216"/>
        <dbReference type="EC" id="2.7.1.71"/>
    </reaction>
</comment>
<comment type="cofactor">
    <cofactor evidence="1">
        <name>Mg(2+)</name>
        <dbReference type="ChEBI" id="CHEBI:18420"/>
    </cofactor>
    <text evidence="1">Binds 1 Mg(2+) ion per subunit.</text>
</comment>
<comment type="pathway">
    <text evidence="1">Metabolic intermediate biosynthesis; chorismate biosynthesis; chorismate from D-erythrose 4-phosphate and phosphoenolpyruvate: step 5/7.</text>
</comment>
<comment type="subunit">
    <text evidence="1">Monomer.</text>
</comment>
<comment type="subcellular location">
    <subcellularLocation>
        <location evidence="1">Cytoplasm</location>
    </subcellularLocation>
</comment>
<comment type="similarity">
    <text evidence="1">Belongs to the shikimate kinase family.</text>
</comment>
<gene>
    <name evidence="1" type="primary">aroK</name>
    <name type="ordered locus">BUsg_520</name>
</gene>
<evidence type="ECO:0000255" key="1">
    <source>
        <dbReference type="HAMAP-Rule" id="MF_00109"/>
    </source>
</evidence>
<reference key="1">
    <citation type="journal article" date="2002" name="Science">
        <title>50 million years of genomic stasis in endosymbiotic bacteria.</title>
        <authorList>
            <person name="Tamas I."/>
            <person name="Klasson L."/>
            <person name="Canbaeck B."/>
            <person name="Naeslund A.K."/>
            <person name="Eriksson A.-S."/>
            <person name="Wernegreen J.J."/>
            <person name="Sandstroem J.P."/>
            <person name="Moran N.A."/>
            <person name="Andersson S.G.E."/>
        </authorList>
    </citation>
    <scope>NUCLEOTIDE SEQUENCE [LARGE SCALE GENOMIC DNA]</scope>
    <source>
        <strain>Sg</strain>
    </source>
</reference>
<sequence length="173" mass="19748">MAEKRNIFLIGPMGAGKSTIGRQLSQQLNMEFFDSDQEIEKRTGANISWVFDVEGEHGFRQREVKVIDELTKKQGIVLATGGGSVKFKENRNILSARGIVIYLETTIEKQLSRTKRDKKRPLLQSNISNRTVLENLAYERNPLYEEIADFKIQTDNQSAKSVAYSIIHLLEKM</sequence>
<keyword id="KW-0028">Amino-acid biosynthesis</keyword>
<keyword id="KW-0057">Aromatic amino acid biosynthesis</keyword>
<keyword id="KW-0067">ATP-binding</keyword>
<keyword id="KW-0963">Cytoplasm</keyword>
<keyword id="KW-0418">Kinase</keyword>
<keyword id="KW-0460">Magnesium</keyword>
<keyword id="KW-0479">Metal-binding</keyword>
<keyword id="KW-0547">Nucleotide-binding</keyword>
<keyword id="KW-0808">Transferase</keyword>
<accession>Q8K938</accession>
<name>AROK_BUCAP</name>